<proteinExistence type="inferred from homology"/>
<organism>
    <name type="scientific">Methanocorpusculum labreanum (strain ATCC 43576 / DSM 4855 / Z)</name>
    <dbReference type="NCBI Taxonomy" id="410358"/>
    <lineage>
        <taxon>Archaea</taxon>
        <taxon>Methanobacteriati</taxon>
        <taxon>Methanobacteriota</taxon>
        <taxon>Stenosarchaea group</taxon>
        <taxon>Methanomicrobia</taxon>
        <taxon>Methanomicrobiales</taxon>
        <taxon>Methanocorpusculaceae</taxon>
        <taxon>Methanocorpusculum</taxon>
    </lineage>
</organism>
<dbReference type="EMBL" id="CP000559">
    <property type="protein sequence ID" value="ABN06964.1"/>
    <property type="molecule type" value="Genomic_DNA"/>
</dbReference>
<dbReference type="RefSeq" id="WP_011833165.1">
    <property type="nucleotide sequence ID" value="NC_008942.1"/>
</dbReference>
<dbReference type="SMR" id="A2SRK8"/>
<dbReference type="STRING" id="410358.Mlab_0793"/>
<dbReference type="GeneID" id="4795134"/>
<dbReference type="KEGG" id="mla:Mlab_0793"/>
<dbReference type="eggNOG" id="arCOG04229">
    <property type="taxonomic scope" value="Archaea"/>
</dbReference>
<dbReference type="HOGENOM" id="CLU_128576_0_0_2"/>
<dbReference type="OrthoDB" id="7000at2157"/>
<dbReference type="Proteomes" id="UP000000365">
    <property type="component" value="Chromosome"/>
</dbReference>
<dbReference type="GO" id="GO:0009347">
    <property type="term" value="C:aspartate carbamoyltransferase complex"/>
    <property type="evidence" value="ECO:0007669"/>
    <property type="project" value="InterPro"/>
</dbReference>
<dbReference type="GO" id="GO:0046872">
    <property type="term" value="F:metal ion binding"/>
    <property type="evidence" value="ECO:0007669"/>
    <property type="project" value="UniProtKB-KW"/>
</dbReference>
<dbReference type="GO" id="GO:0006207">
    <property type="term" value="P:'de novo' pyrimidine nucleobase biosynthetic process"/>
    <property type="evidence" value="ECO:0007669"/>
    <property type="project" value="InterPro"/>
</dbReference>
<dbReference type="GO" id="GO:0006221">
    <property type="term" value="P:pyrimidine nucleotide biosynthetic process"/>
    <property type="evidence" value="ECO:0007669"/>
    <property type="project" value="UniProtKB-UniRule"/>
</dbReference>
<dbReference type="Gene3D" id="2.30.30.20">
    <property type="entry name" value="Aspartate carbamoyltransferase regulatory subunit, C-terminal domain"/>
    <property type="match status" value="1"/>
</dbReference>
<dbReference type="Gene3D" id="3.30.70.140">
    <property type="entry name" value="Aspartate carbamoyltransferase regulatory subunit, N-terminal domain"/>
    <property type="match status" value="1"/>
</dbReference>
<dbReference type="HAMAP" id="MF_00002">
    <property type="entry name" value="Asp_carb_tr_reg"/>
    <property type="match status" value="1"/>
</dbReference>
<dbReference type="InterPro" id="IPR020545">
    <property type="entry name" value="Asp_carbamoyltransf_reg_N"/>
</dbReference>
<dbReference type="InterPro" id="IPR002801">
    <property type="entry name" value="Asp_carbamoylTrfase_reg"/>
</dbReference>
<dbReference type="InterPro" id="IPR020542">
    <property type="entry name" value="Asp_carbamoyltrfase_reg_C"/>
</dbReference>
<dbReference type="InterPro" id="IPR036792">
    <property type="entry name" value="Asp_carbatrfase_reg_C_sf"/>
</dbReference>
<dbReference type="InterPro" id="IPR036793">
    <property type="entry name" value="Asp_carbatrfase_reg_N_sf"/>
</dbReference>
<dbReference type="NCBIfam" id="TIGR00240">
    <property type="entry name" value="ATCase_reg"/>
    <property type="match status" value="1"/>
</dbReference>
<dbReference type="PANTHER" id="PTHR35805">
    <property type="entry name" value="ASPARTATE CARBAMOYLTRANSFERASE REGULATORY CHAIN"/>
    <property type="match status" value="1"/>
</dbReference>
<dbReference type="PANTHER" id="PTHR35805:SF1">
    <property type="entry name" value="ASPARTATE CARBAMOYLTRANSFERASE REGULATORY CHAIN"/>
    <property type="match status" value="1"/>
</dbReference>
<dbReference type="Pfam" id="PF01948">
    <property type="entry name" value="PyrI"/>
    <property type="match status" value="1"/>
</dbReference>
<dbReference type="Pfam" id="PF02748">
    <property type="entry name" value="PyrI_C"/>
    <property type="match status" value="1"/>
</dbReference>
<dbReference type="SUPFAM" id="SSF57825">
    <property type="entry name" value="Aspartate carbamoyltransferase, Regulatory-chain, C-terminal domain"/>
    <property type="match status" value="1"/>
</dbReference>
<dbReference type="SUPFAM" id="SSF54893">
    <property type="entry name" value="Aspartate carbamoyltransferase, Regulatory-chain, N-terminal domain"/>
    <property type="match status" value="1"/>
</dbReference>
<gene>
    <name evidence="1" type="primary">pyrI</name>
    <name type="ordered locus">Mlab_0793</name>
</gene>
<keyword id="KW-0479">Metal-binding</keyword>
<keyword id="KW-0665">Pyrimidine biosynthesis</keyword>
<keyword id="KW-1185">Reference proteome</keyword>
<keyword id="KW-0862">Zinc</keyword>
<protein>
    <recommendedName>
        <fullName evidence="1">Aspartate carbamoyltransferase regulatory chain</fullName>
    </recommendedName>
</protein>
<comment type="function">
    <text evidence="1">Involved in allosteric regulation of aspartate carbamoyltransferase.</text>
</comment>
<comment type="cofactor">
    <cofactor evidence="1">
        <name>Zn(2+)</name>
        <dbReference type="ChEBI" id="CHEBI:29105"/>
    </cofactor>
    <text evidence="1">Binds 1 zinc ion per subunit.</text>
</comment>
<comment type="subunit">
    <text evidence="1">Contains catalytic and regulatory chains.</text>
</comment>
<comment type="similarity">
    <text evidence="1">Belongs to the PyrI family.</text>
</comment>
<name>PYRI_METLZ</name>
<reference key="1">
    <citation type="journal article" date="2009" name="Stand. Genomic Sci.">
        <title>Complete genome sequence of Methanocorpusculum labreanum type strain Z.</title>
        <authorList>
            <person name="Anderson I.J."/>
            <person name="Sieprawska-Lupa M."/>
            <person name="Goltsman E."/>
            <person name="Lapidus A."/>
            <person name="Copeland A."/>
            <person name="Glavina Del Rio T."/>
            <person name="Tice H."/>
            <person name="Dalin E."/>
            <person name="Barry K."/>
            <person name="Pitluck S."/>
            <person name="Hauser L."/>
            <person name="Land M."/>
            <person name="Lucas S."/>
            <person name="Richardson P."/>
            <person name="Whitman W.B."/>
            <person name="Kyrpides N.C."/>
        </authorList>
    </citation>
    <scope>NUCLEOTIDE SEQUENCE [LARGE SCALE GENOMIC DNA]</scope>
    <source>
        <strain>ATCC 43576 / DSM 4855 / Z</strain>
    </source>
</reference>
<sequence length="155" mass="16979">MVRAISDGIVISPIKNGTVIDHITPGEGLTVLRILGIRDGTNVTVIVASNVPSSRGGRKDMVKIENRELLKDEVDKIALVAPDATISIIRNFKVSVKKPVEVPKQIIGVIKCPNPNCITNTKEPVQSRFVVHPRGFRCQYCDSLISCEMDIGDYI</sequence>
<accession>A2SRK8</accession>
<feature type="chain" id="PRO_0000321503" description="Aspartate carbamoyltransferase regulatory chain">
    <location>
        <begin position="1"/>
        <end position="155"/>
    </location>
</feature>
<feature type="binding site" evidence="1">
    <location>
        <position position="112"/>
    </location>
    <ligand>
        <name>Zn(2+)</name>
        <dbReference type="ChEBI" id="CHEBI:29105"/>
    </ligand>
</feature>
<feature type="binding site" evidence="1">
    <location>
        <position position="117"/>
    </location>
    <ligand>
        <name>Zn(2+)</name>
        <dbReference type="ChEBI" id="CHEBI:29105"/>
    </ligand>
</feature>
<feature type="binding site" evidence="1">
    <location>
        <position position="138"/>
    </location>
    <ligand>
        <name>Zn(2+)</name>
        <dbReference type="ChEBI" id="CHEBI:29105"/>
    </ligand>
</feature>
<feature type="binding site" evidence="1">
    <location>
        <position position="141"/>
    </location>
    <ligand>
        <name>Zn(2+)</name>
        <dbReference type="ChEBI" id="CHEBI:29105"/>
    </ligand>
</feature>
<evidence type="ECO:0000255" key="1">
    <source>
        <dbReference type="HAMAP-Rule" id="MF_00002"/>
    </source>
</evidence>